<reference key="1">
    <citation type="journal article" date="2007" name="PLoS Genet.">
        <title>A tale of two oxidation states: bacterial colonization of arsenic-rich environments.</title>
        <authorList>
            <person name="Muller D."/>
            <person name="Medigue C."/>
            <person name="Koechler S."/>
            <person name="Barbe V."/>
            <person name="Barakat M."/>
            <person name="Talla E."/>
            <person name="Bonnefoy V."/>
            <person name="Krin E."/>
            <person name="Arsene-Ploetze F."/>
            <person name="Carapito C."/>
            <person name="Chandler M."/>
            <person name="Cournoyer B."/>
            <person name="Cruveiller S."/>
            <person name="Dossat C."/>
            <person name="Duval S."/>
            <person name="Heymann M."/>
            <person name="Leize E."/>
            <person name="Lieutaud A."/>
            <person name="Lievremont D."/>
            <person name="Makita Y."/>
            <person name="Mangenot S."/>
            <person name="Nitschke W."/>
            <person name="Ortet P."/>
            <person name="Perdrial N."/>
            <person name="Schoepp B."/>
            <person name="Siguier P."/>
            <person name="Simeonova D.D."/>
            <person name="Rouy Z."/>
            <person name="Segurens B."/>
            <person name="Turlin E."/>
            <person name="Vallenet D."/>
            <person name="van Dorsselaer A."/>
            <person name="Weiss S."/>
            <person name="Weissenbach J."/>
            <person name="Lett M.-C."/>
            <person name="Danchin A."/>
            <person name="Bertin P.N."/>
        </authorList>
    </citation>
    <scope>NUCLEOTIDE SEQUENCE [LARGE SCALE GENOMIC DNA]</scope>
    <source>
        <strain>ULPAs1</strain>
    </source>
</reference>
<protein>
    <recommendedName>
        <fullName evidence="1">Putative phosphoenolpyruvate synthase regulatory protein</fullName>
        <shortName evidence="1">PEP synthase regulatory protein</shortName>
        <shortName evidence="1">PSRP</shortName>
        <ecNumber evidence="1">2.7.11.33</ecNumber>
        <ecNumber evidence="1">2.7.4.28</ecNumber>
    </recommendedName>
    <alternativeName>
        <fullName evidence="1">Pyruvate, water dikinase regulatory protein</fullName>
    </alternativeName>
</protein>
<gene>
    <name type="ordered locus">HEAR1351</name>
</gene>
<accession>A4G4T7</accession>
<organism>
    <name type="scientific">Herminiimonas arsenicoxydans</name>
    <dbReference type="NCBI Taxonomy" id="204773"/>
    <lineage>
        <taxon>Bacteria</taxon>
        <taxon>Pseudomonadati</taxon>
        <taxon>Pseudomonadota</taxon>
        <taxon>Betaproteobacteria</taxon>
        <taxon>Burkholderiales</taxon>
        <taxon>Oxalobacteraceae</taxon>
        <taxon>Herminiimonas</taxon>
    </lineage>
</organism>
<evidence type="ECO:0000255" key="1">
    <source>
        <dbReference type="HAMAP-Rule" id="MF_01062"/>
    </source>
</evidence>
<sequence length="281" mass="31473">MSTSANRSTPSARTVFFISDGTGITAETFGHSVLTQFDLRFKQIRLPFIDTLDKAHDALRKINDAYELDGQRPIIFSTLVKANLSKVVRQSKGMHMDLIQTFVEPLEQELGVKSTHTIGRSHTSTDSEEYKNRIEAINFSLAHDDGQSNKNLAEADVILVGVSRSGKTPTSLFLAMQYGIKAANYPLIPDDFAREKLPGGLLEYKSKIFGLSIAPDRLAEIRNERLPGSKYAALANCRYEVNEAEKMMRREGIRWMSSTTKSIEEISATILQEIKSEHRTD</sequence>
<proteinExistence type="inferred from homology"/>
<feature type="chain" id="PRO_0000316681" description="Putative phosphoenolpyruvate synthase regulatory protein">
    <location>
        <begin position="1"/>
        <end position="281"/>
    </location>
</feature>
<feature type="binding site" evidence="1">
    <location>
        <begin position="161"/>
        <end position="168"/>
    </location>
    <ligand>
        <name>ADP</name>
        <dbReference type="ChEBI" id="CHEBI:456216"/>
    </ligand>
</feature>
<comment type="function">
    <text evidence="1">Bifunctional serine/threonine kinase and phosphorylase involved in the regulation of the phosphoenolpyruvate synthase (PEPS) by catalyzing its phosphorylation/dephosphorylation.</text>
</comment>
<comment type="catalytic activity">
    <reaction evidence="1">
        <text>[pyruvate, water dikinase] + ADP = [pyruvate, water dikinase]-phosphate + AMP + H(+)</text>
        <dbReference type="Rhea" id="RHEA:46020"/>
        <dbReference type="Rhea" id="RHEA-COMP:11425"/>
        <dbReference type="Rhea" id="RHEA-COMP:11426"/>
        <dbReference type="ChEBI" id="CHEBI:15378"/>
        <dbReference type="ChEBI" id="CHEBI:43176"/>
        <dbReference type="ChEBI" id="CHEBI:68546"/>
        <dbReference type="ChEBI" id="CHEBI:456215"/>
        <dbReference type="ChEBI" id="CHEBI:456216"/>
        <dbReference type="EC" id="2.7.11.33"/>
    </reaction>
</comment>
<comment type="catalytic activity">
    <reaction evidence="1">
        <text>[pyruvate, water dikinase]-phosphate + phosphate + H(+) = [pyruvate, water dikinase] + diphosphate</text>
        <dbReference type="Rhea" id="RHEA:48580"/>
        <dbReference type="Rhea" id="RHEA-COMP:11425"/>
        <dbReference type="Rhea" id="RHEA-COMP:11426"/>
        <dbReference type="ChEBI" id="CHEBI:15378"/>
        <dbReference type="ChEBI" id="CHEBI:33019"/>
        <dbReference type="ChEBI" id="CHEBI:43176"/>
        <dbReference type="ChEBI" id="CHEBI:43474"/>
        <dbReference type="ChEBI" id="CHEBI:68546"/>
        <dbReference type="EC" id="2.7.4.28"/>
    </reaction>
</comment>
<comment type="similarity">
    <text evidence="1">Belongs to the pyruvate, phosphate/water dikinase regulatory protein family. PSRP subfamily.</text>
</comment>
<dbReference type="EC" id="2.7.11.33" evidence="1"/>
<dbReference type="EC" id="2.7.4.28" evidence="1"/>
<dbReference type="EMBL" id="CU207211">
    <property type="protein sequence ID" value="CAL61524.1"/>
    <property type="molecule type" value="Genomic_DNA"/>
</dbReference>
<dbReference type="SMR" id="A4G4T7"/>
<dbReference type="STRING" id="204773.HEAR1351"/>
<dbReference type="KEGG" id="har:HEAR1351"/>
<dbReference type="eggNOG" id="COG1806">
    <property type="taxonomic scope" value="Bacteria"/>
</dbReference>
<dbReference type="HOGENOM" id="CLU_046206_1_0_4"/>
<dbReference type="OrthoDB" id="9782201at2"/>
<dbReference type="Proteomes" id="UP000006697">
    <property type="component" value="Chromosome"/>
</dbReference>
<dbReference type="GO" id="GO:0043531">
    <property type="term" value="F:ADP binding"/>
    <property type="evidence" value="ECO:0007669"/>
    <property type="project" value="UniProtKB-UniRule"/>
</dbReference>
<dbReference type="GO" id="GO:0005524">
    <property type="term" value="F:ATP binding"/>
    <property type="evidence" value="ECO:0007669"/>
    <property type="project" value="InterPro"/>
</dbReference>
<dbReference type="GO" id="GO:0016776">
    <property type="term" value="F:phosphotransferase activity, phosphate group as acceptor"/>
    <property type="evidence" value="ECO:0007669"/>
    <property type="project" value="UniProtKB-UniRule"/>
</dbReference>
<dbReference type="GO" id="GO:0004674">
    <property type="term" value="F:protein serine/threonine kinase activity"/>
    <property type="evidence" value="ECO:0007669"/>
    <property type="project" value="UniProtKB-UniRule"/>
</dbReference>
<dbReference type="HAMAP" id="MF_01062">
    <property type="entry name" value="PSRP"/>
    <property type="match status" value="1"/>
</dbReference>
<dbReference type="InterPro" id="IPR005177">
    <property type="entry name" value="Kinase-pyrophosphorylase"/>
</dbReference>
<dbReference type="InterPro" id="IPR026530">
    <property type="entry name" value="PSRP"/>
</dbReference>
<dbReference type="NCBIfam" id="NF003742">
    <property type="entry name" value="PRK05339.1"/>
    <property type="match status" value="1"/>
</dbReference>
<dbReference type="PANTHER" id="PTHR31756">
    <property type="entry name" value="PYRUVATE, PHOSPHATE DIKINASE REGULATORY PROTEIN 1, CHLOROPLASTIC"/>
    <property type="match status" value="1"/>
</dbReference>
<dbReference type="PANTHER" id="PTHR31756:SF3">
    <property type="entry name" value="PYRUVATE, PHOSPHATE DIKINASE REGULATORY PROTEIN 1, CHLOROPLASTIC"/>
    <property type="match status" value="1"/>
</dbReference>
<dbReference type="Pfam" id="PF03618">
    <property type="entry name" value="Kinase-PPPase"/>
    <property type="match status" value="1"/>
</dbReference>
<name>PSRP_HERAR</name>
<keyword id="KW-0418">Kinase</keyword>
<keyword id="KW-0547">Nucleotide-binding</keyword>
<keyword id="KW-1185">Reference proteome</keyword>
<keyword id="KW-0723">Serine/threonine-protein kinase</keyword>
<keyword id="KW-0808">Transferase</keyword>